<name>DCUP_BURPS</name>
<gene>
    <name evidence="1" type="primary">hemE</name>
    <name type="ordered locus">BPSL3391</name>
</gene>
<sequence length="364" mass="39472">MAQTLLNDTFLRALLREPTDYTPIWLMRQAGRYLPEYNATRARAGSFLGLAKQPDYATEVTLQPLERFPLDAAILFSDILTIPDAMGLGLDFAAGEGPKFAHPVRTEADVAKLAVPDIGATLGYVTDAVREIRRALTDGEGRQRVPLIGFSGSPWTLACYMVEGGGSDDFRTVKSMAYARPDLMHRILDVNAQAVAAYLNAQIEAGAQAVMIFDTWGGALADGAYQRFSLDYVRRVLAQLKREHDGARVPAIAFTKGGGLWLEELAATGVDAVGLDWTVNLGRARERVAGRVALQGNLDPTILFAPPEAIRAEARAVLDSYGNHPGHVFNLGHGISQFTPPEHVAELVDEVHRHSRAIRSGAGS</sequence>
<organism>
    <name type="scientific">Burkholderia pseudomallei (strain K96243)</name>
    <dbReference type="NCBI Taxonomy" id="272560"/>
    <lineage>
        <taxon>Bacteria</taxon>
        <taxon>Pseudomonadati</taxon>
        <taxon>Pseudomonadota</taxon>
        <taxon>Betaproteobacteria</taxon>
        <taxon>Burkholderiales</taxon>
        <taxon>Burkholderiaceae</taxon>
        <taxon>Burkholderia</taxon>
        <taxon>pseudomallei group</taxon>
    </lineage>
</organism>
<keyword id="KW-0963">Cytoplasm</keyword>
<keyword id="KW-0210">Decarboxylase</keyword>
<keyword id="KW-0456">Lyase</keyword>
<keyword id="KW-0627">Porphyrin biosynthesis</keyword>
<keyword id="KW-1185">Reference proteome</keyword>
<protein>
    <recommendedName>
        <fullName evidence="1">Uroporphyrinogen decarboxylase</fullName>
        <shortName evidence="1">UPD</shortName>
        <shortName evidence="1">URO-D</shortName>
        <ecNumber evidence="1">4.1.1.37</ecNumber>
    </recommendedName>
</protein>
<feature type="chain" id="PRO_1000023884" description="Uroporphyrinogen decarboxylase">
    <location>
        <begin position="1"/>
        <end position="364"/>
    </location>
</feature>
<feature type="binding site" evidence="1">
    <location>
        <begin position="28"/>
        <end position="32"/>
    </location>
    <ligand>
        <name>substrate</name>
    </ligand>
</feature>
<feature type="binding site" evidence="1">
    <location>
        <position position="78"/>
    </location>
    <ligand>
        <name>substrate</name>
    </ligand>
</feature>
<feature type="binding site" evidence="1">
    <location>
        <position position="160"/>
    </location>
    <ligand>
        <name>substrate</name>
    </ligand>
</feature>
<feature type="binding site" evidence="1">
    <location>
        <position position="215"/>
    </location>
    <ligand>
        <name>substrate</name>
    </ligand>
</feature>
<feature type="binding site" evidence="1">
    <location>
        <position position="333"/>
    </location>
    <ligand>
        <name>substrate</name>
    </ligand>
</feature>
<feature type="site" description="Transition state stabilizer" evidence="1">
    <location>
        <position position="78"/>
    </location>
</feature>
<dbReference type="EC" id="4.1.1.37" evidence="1"/>
<dbReference type="EMBL" id="BX571965">
    <property type="protein sequence ID" value="CAH37403.1"/>
    <property type="molecule type" value="Genomic_DNA"/>
</dbReference>
<dbReference type="RefSeq" id="WP_004524502.1">
    <property type="nucleotide sequence ID" value="NZ_CP009538.1"/>
</dbReference>
<dbReference type="RefSeq" id="YP_109984.1">
    <property type="nucleotide sequence ID" value="NC_006350.1"/>
</dbReference>
<dbReference type="SMR" id="Q63PI5"/>
<dbReference type="STRING" id="272560.BPSL3391"/>
<dbReference type="KEGG" id="bps:BPSL3391"/>
<dbReference type="PATRIC" id="fig|272560.51.peg.1800"/>
<dbReference type="eggNOG" id="COG0407">
    <property type="taxonomic scope" value="Bacteria"/>
</dbReference>
<dbReference type="UniPathway" id="UPA00251">
    <property type="reaction ID" value="UER00321"/>
</dbReference>
<dbReference type="Proteomes" id="UP000000605">
    <property type="component" value="Chromosome 1"/>
</dbReference>
<dbReference type="GO" id="GO:0005829">
    <property type="term" value="C:cytosol"/>
    <property type="evidence" value="ECO:0007669"/>
    <property type="project" value="TreeGrafter"/>
</dbReference>
<dbReference type="GO" id="GO:0004853">
    <property type="term" value="F:uroporphyrinogen decarboxylase activity"/>
    <property type="evidence" value="ECO:0007669"/>
    <property type="project" value="UniProtKB-UniRule"/>
</dbReference>
<dbReference type="GO" id="GO:0019353">
    <property type="term" value="P:protoporphyrinogen IX biosynthetic process from glutamate"/>
    <property type="evidence" value="ECO:0007669"/>
    <property type="project" value="TreeGrafter"/>
</dbReference>
<dbReference type="CDD" id="cd00717">
    <property type="entry name" value="URO-D"/>
    <property type="match status" value="1"/>
</dbReference>
<dbReference type="FunFam" id="3.20.20.210:FF:000001">
    <property type="entry name" value="Uroporphyrinogen decarboxylase"/>
    <property type="match status" value="1"/>
</dbReference>
<dbReference type="Gene3D" id="3.20.20.210">
    <property type="match status" value="1"/>
</dbReference>
<dbReference type="HAMAP" id="MF_00218">
    <property type="entry name" value="URO_D"/>
    <property type="match status" value="1"/>
</dbReference>
<dbReference type="InterPro" id="IPR038071">
    <property type="entry name" value="UROD/MetE-like_sf"/>
</dbReference>
<dbReference type="InterPro" id="IPR006361">
    <property type="entry name" value="Uroporphyrinogen_deCO2ase_HemE"/>
</dbReference>
<dbReference type="InterPro" id="IPR000257">
    <property type="entry name" value="Uroporphyrinogen_deCOase"/>
</dbReference>
<dbReference type="NCBIfam" id="TIGR01464">
    <property type="entry name" value="hemE"/>
    <property type="match status" value="1"/>
</dbReference>
<dbReference type="PANTHER" id="PTHR21091">
    <property type="entry name" value="METHYLTETRAHYDROFOLATE:HOMOCYSTEINE METHYLTRANSFERASE RELATED"/>
    <property type="match status" value="1"/>
</dbReference>
<dbReference type="PANTHER" id="PTHR21091:SF169">
    <property type="entry name" value="UROPORPHYRINOGEN DECARBOXYLASE"/>
    <property type="match status" value="1"/>
</dbReference>
<dbReference type="Pfam" id="PF01208">
    <property type="entry name" value="URO-D"/>
    <property type="match status" value="1"/>
</dbReference>
<dbReference type="SUPFAM" id="SSF51726">
    <property type="entry name" value="UROD/MetE-like"/>
    <property type="match status" value="1"/>
</dbReference>
<dbReference type="PROSITE" id="PS00906">
    <property type="entry name" value="UROD_1"/>
    <property type="match status" value="1"/>
</dbReference>
<dbReference type="PROSITE" id="PS00907">
    <property type="entry name" value="UROD_2"/>
    <property type="match status" value="1"/>
</dbReference>
<reference key="1">
    <citation type="journal article" date="2004" name="Proc. Natl. Acad. Sci. U.S.A.">
        <title>Genomic plasticity of the causative agent of melioidosis, Burkholderia pseudomallei.</title>
        <authorList>
            <person name="Holden M.T.G."/>
            <person name="Titball R.W."/>
            <person name="Peacock S.J."/>
            <person name="Cerdeno-Tarraga A.-M."/>
            <person name="Atkins T."/>
            <person name="Crossman L.C."/>
            <person name="Pitt T."/>
            <person name="Churcher C."/>
            <person name="Mungall K.L."/>
            <person name="Bentley S.D."/>
            <person name="Sebaihia M."/>
            <person name="Thomson N.R."/>
            <person name="Bason N."/>
            <person name="Beacham I.R."/>
            <person name="Brooks K."/>
            <person name="Brown K.A."/>
            <person name="Brown N.F."/>
            <person name="Challis G.L."/>
            <person name="Cherevach I."/>
            <person name="Chillingworth T."/>
            <person name="Cronin A."/>
            <person name="Crossett B."/>
            <person name="Davis P."/>
            <person name="DeShazer D."/>
            <person name="Feltwell T."/>
            <person name="Fraser A."/>
            <person name="Hance Z."/>
            <person name="Hauser H."/>
            <person name="Holroyd S."/>
            <person name="Jagels K."/>
            <person name="Keith K.E."/>
            <person name="Maddison M."/>
            <person name="Moule S."/>
            <person name="Price C."/>
            <person name="Quail M.A."/>
            <person name="Rabbinowitsch E."/>
            <person name="Rutherford K."/>
            <person name="Sanders M."/>
            <person name="Simmonds M."/>
            <person name="Songsivilai S."/>
            <person name="Stevens K."/>
            <person name="Tumapa S."/>
            <person name="Vesaratchavest M."/>
            <person name="Whitehead S."/>
            <person name="Yeats C."/>
            <person name="Barrell B.G."/>
            <person name="Oyston P.C.F."/>
            <person name="Parkhill J."/>
        </authorList>
    </citation>
    <scope>NUCLEOTIDE SEQUENCE [LARGE SCALE GENOMIC DNA]</scope>
    <source>
        <strain>K96243</strain>
    </source>
</reference>
<proteinExistence type="inferred from homology"/>
<accession>Q63PI5</accession>
<comment type="function">
    <text evidence="1">Catalyzes the decarboxylation of four acetate groups of uroporphyrinogen-III to yield coproporphyrinogen-III.</text>
</comment>
<comment type="catalytic activity">
    <reaction evidence="1">
        <text>uroporphyrinogen III + 4 H(+) = coproporphyrinogen III + 4 CO2</text>
        <dbReference type="Rhea" id="RHEA:19865"/>
        <dbReference type="ChEBI" id="CHEBI:15378"/>
        <dbReference type="ChEBI" id="CHEBI:16526"/>
        <dbReference type="ChEBI" id="CHEBI:57308"/>
        <dbReference type="ChEBI" id="CHEBI:57309"/>
        <dbReference type="EC" id="4.1.1.37"/>
    </reaction>
</comment>
<comment type="pathway">
    <text evidence="1">Porphyrin-containing compound metabolism; protoporphyrin-IX biosynthesis; coproporphyrinogen-III from 5-aminolevulinate: step 4/4.</text>
</comment>
<comment type="subunit">
    <text evidence="1">Homodimer.</text>
</comment>
<comment type="subcellular location">
    <subcellularLocation>
        <location evidence="1">Cytoplasm</location>
    </subcellularLocation>
</comment>
<comment type="similarity">
    <text evidence="1">Belongs to the uroporphyrinogen decarboxylase family.</text>
</comment>
<evidence type="ECO:0000255" key="1">
    <source>
        <dbReference type="HAMAP-Rule" id="MF_00218"/>
    </source>
</evidence>